<feature type="signal peptide" evidence="1">
    <location>
        <begin position="1"/>
        <end position="33"/>
    </location>
</feature>
<feature type="chain" id="PRO_0000384371" description="Alpha-L-arabinofuranosidase 1">
    <location>
        <begin position="34"/>
        <end position="678"/>
    </location>
</feature>
<feature type="domain" description="CBM-cenC">
    <location>
        <begin position="152"/>
        <end position="239"/>
    </location>
</feature>
<feature type="glycosylation site" description="N-linked (GlcNAc...) asparagine" evidence="1">
    <location>
        <position position="181"/>
    </location>
</feature>
<feature type="glycosylation site" description="N-linked (GlcNAc...) asparagine" evidence="1">
    <location>
        <position position="362"/>
    </location>
</feature>
<feature type="glycosylation site" description="N-linked (GlcNAc...) asparagine" evidence="1">
    <location>
        <position position="523"/>
    </location>
</feature>
<feature type="glycosylation site" description="N-linked (GlcNAc...) asparagine" evidence="1">
    <location>
        <position position="555"/>
    </location>
</feature>
<feature type="sequence conflict" description="In Ref. 4; AAN28883/AAK50089." evidence="6" ref="4">
    <original>L</original>
    <variation>P</variation>
    <location>
        <position position="251"/>
    </location>
</feature>
<feature type="sequence conflict" description="In Ref. 1; AAO92261." evidence="6" ref="1">
    <original>QM</original>
    <variation>HL</variation>
    <location>
        <begin position="253"/>
        <end position="254"/>
    </location>
</feature>
<feature type="sequence conflict" description="In Ref. 1; AAO92261." evidence="6" ref="1">
    <original>R</original>
    <variation>G</variation>
    <location>
        <position position="453"/>
    </location>
</feature>
<feature type="sequence conflict" description="In Ref. 1; AAO92261." evidence="6" ref="1">
    <original>E</original>
    <variation>D</variation>
    <location>
        <position position="499"/>
    </location>
</feature>
<evidence type="ECO:0000255" key="1"/>
<evidence type="ECO:0000269" key="2">
    <source>
    </source>
</evidence>
<evidence type="ECO:0000269" key="3">
    <source>
    </source>
</evidence>
<evidence type="ECO:0000269" key="4">
    <source>
    </source>
</evidence>
<evidence type="ECO:0000269" key="5">
    <source>
    </source>
</evidence>
<evidence type="ECO:0000305" key="6"/>
<accession>Q9SG80</accession>
<accession>Q56W72</accession>
<accession>Q570E2</accession>
<accession>Q84RC5</accession>
<accession>Q94JT7</accession>
<gene>
    <name type="primary">ASD1</name>
    <name type="synonym">ARAF</name>
    <name type="synonym">ARAF1</name>
    <name type="ordered locus">At3g10740</name>
    <name type="ORF">T7M13.18</name>
</gene>
<reference key="1">
    <citation type="journal article" date="2003" name="J. Exp. Bot.">
        <title>Two alpha-L-arabinofuranosidase genes in Arabidopsis thaliana are differentially expressed during vegetative growth and flower development.</title>
        <authorList>
            <person name="Fulton L.M."/>
            <person name="Cobbett C.S."/>
        </authorList>
    </citation>
    <scope>NUCLEOTIDE SEQUENCE [MRNA]</scope>
    <scope>TISSUE SPECIFICITY</scope>
    <scope>INDUCTION BY HORMONES</scope>
    <source>
        <strain>cv. Columbia</strain>
    </source>
</reference>
<reference key="2">
    <citation type="journal article" date="2000" name="Nature">
        <title>Sequence and analysis of chromosome 3 of the plant Arabidopsis thaliana.</title>
        <authorList>
            <person name="Salanoubat M."/>
            <person name="Lemcke K."/>
            <person name="Rieger M."/>
            <person name="Ansorge W."/>
            <person name="Unseld M."/>
            <person name="Fartmann B."/>
            <person name="Valle G."/>
            <person name="Bloecker H."/>
            <person name="Perez-Alonso M."/>
            <person name="Obermaier B."/>
            <person name="Delseny M."/>
            <person name="Boutry M."/>
            <person name="Grivell L.A."/>
            <person name="Mache R."/>
            <person name="Puigdomenech P."/>
            <person name="De Simone V."/>
            <person name="Choisne N."/>
            <person name="Artiguenave F."/>
            <person name="Robert C."/>
            <person name="Brottier P."/>
            <person name="Wincker P."/>
            <person name="Cattolico L."/>
            <person name="Weissenbach J."/>
            <person name="Saurin W."/>
            <person name="Quetier F."/>
            <person name="Schaefer M."/>
            <person name="Mueller-Auer S."/>
            <person name="Gabel C."/>
            <person name="Fuchs M."/>
            <person name="Benes V."/>
            <person name="Wurmbach E."/>
            <person name="Drzonek H."/>
            <person name="Erfle H."/>
            <person name="Jordan N."/>
            <person name="Bangert S."/>
            <person name="Wiedelmann R."/>
            <person name="Kranz H."/>
            <person name="Voss H."/>
            <person name="Holland R."/>
            <person name="Brandt P."/>
            <person name="Nyakatura G."/>
            <person name="Vezzi A."/>
            <person name="D'Angelo M."/>
            <person name="Pallavicini A."/>
            <person name="Toppo S."/>
            <person name="Simionati B."/>
            <person name="Conrad A."/>
            <person name="Hornischer K."/>
            <person name="Kauer G."/>
            <person name="Loehnert T.-H."/>
            <person name="Nordsiek G."/>
            <person name="Reichelt J."/>
            <person name="Scharfe M."/>
            <person name="Schoen O."/>
            <person name="Bargues M."/>
            <person name="Terol J."/>
            <person name="Climent J."/>
            <person name="Navarro P."/>
            <person name="Collado C."/>
            <person name="Perez-Perez A."/>
            <person name="Ottenwaelder B."/>
            <person name="Duchemin D."/>
            <person name="Cooke R."/>
            <person name="Laudie M."/>
            <person name="Berger-Llauro C."/>
            <person name="Purnelle B."/>
            <person name="Masuy D."/>
            <person name="de Haan M."/>
            <person name="Maarse A.C."/>
            <person name="Alcaraz J.-P."/>
            <person name="Cottet A."/>
            <person name="Casacuberta E."/>
            <person name="Monfort A."/>
            <person name="Argiriou A."/>
            <person name="Flores M."/>
            <person name="Liguori R."/>
            <person name="Vitale D."/>
            <person name="Mannhaupt G."/>
            <person name="Haase D."/>
            <person name="Schoof H."/>
            <person name="Rudd S."/>
            <person name="Zaccaria P."/>
            <person name="Mewes H.-W."/>
            <person name="Mayer K.F.X."/>
            <person name="Kaul S."/>
            <person name="Town C.D."/>
            <person name="Koo H.L."/>
            <person name="Tallon L.J."/>
            <person name="Jenkins J."/>
            <person name="Rooney T."/>
            <person name="Rizzo M."/>
            <person name="Walts A."/>
            <person name="Utterback T."/>
            <person name="Fujii C.Y."/>
            <person name="Shea T.P."/>
            <person name="Creasy T.H."/>
            <person name="Haas B."/>
            <person name="Maiti R."/>
            <person name="Wu D."/>
            <person name="Peterson J."/>
            <person name="Van Aken S."/>
            <person name="Pai G."/>
            <person name="Militscher J."/>
            <person name="Sellers P."/>
            <person name="Gill J.E."/>
            <person name="Feldblyum T.V."/>
            <person name="Preuss D."/>
            <person name="Lin X."/>
            <person name="Nierman W.C."/>
            <person name="Salzberg S.L."/>
            <person name="White O."/>
            <person name="Venter J.C."/>
            <person name="Fraser C.M."/>
            <person name="Kaneko T."/>
            <person name="Nakamura Y."/>
            <person name="Sato S."/>
            <person name="Kato T."/>
            <person name="Asamizu E."/>
            <person name="Sasamoto S."/>
            <person name="Kimura T."/>
            <person name="Idesawa K."/>
            <person name="Kawashima K."/>
            <person name="Kishida Y."/>
            <person name="Kiyokawa C."/>
            <person name="Kohara M."/>
            <person name="Matsumoto M."/>
            <person name="Matsuno A."/>
            <person name="Muraki A."/>
            <person name="Nakayama S."/>
            <person name="Nakazaki N."/>
            <person name="Shinpo S."/>
            <person name="Takeuchi C."/>
            <person name="Wada T."/>
            <person name="Watanabe A."/>
            <person name="Yamada M."/>
            <person name="Yasuda M."/>
            <person name="Tabata S."/>
        </authorList>
    </citation>
    <scope>NUCLEOTIDE SEQUENCE [LARGE SCALE GENOMIC DNA]</scope>
    <source>
        <strain>cv. Columbia</strain>
    </source>
</reference>
<reference key="3">
    <citation type="journal article" date="2017" name="Plant J.">
        <title>Araport11: a complete reannotation of the Arabidopsis thaliana reference genome.</title>
        <authorList>
            <person name="Cheng C.Y."/>
            <person name="Krishnakumar V."/>
            <person name="Chan A.P."/>
            <person name="Thibaud-Nissen F."/>
            <person name="Schobel S."/>
            <person name="Town C.D."/>
        </authorList>
    </citation>
    <scope>GENOME REANNOTATION</scope>
    <source>
        <strain>cv. Columbia</strain>
    </source>
</reference>
<reference key="4">
    <citation type="journal article" date="2003" name="Science">
        <title>Empirical analysis of transcriptional activity in the Arabidopsis genome.</title>
        <authorList>
            <person name="Yamada K."/>
            <person name="Lim J."/>
            <person name="Dale J.M."/>
            <person name="Chen H."/>
            <person name="Shinn P."/>
            <person name="Palm C.J."/>
            <person name="Southwick A.M."/>
            <person name="Wu H.C."/>
            <person name="Kim C.J."/>
            <person name="Nguyen M."/>
            <person name="Pham P.K."/>
            <person name="Cheuk R.F."/>
            <person name="Karlin-Newmann G."/>
            <person name="Liu S.X."/>
            <person name="Lam B."/>
            <person name="Sakano H."/>
            <person name="Wu T."/>
            <person name="Yu G."/>
            <person name="Miranda M."/>
            <person name="Quach H.L."/>
            <person name="Tripp M."/>
            <person name="Chang C.H."/>
            <person name="Lee J.M."/>
            <person name="Toriumi M.J."/>
            <person name="Chan M.M."/>
            <person name="Tang C.C."/>
            <person name="Onodera C.S."/>
            <person name="Deng J.M."/>
            <person name="Akiyama K."/>
            <person name="Ansari Y."/>
            <person name="Arakawa T."/>
            <person name="Banh J."/>
            <person name="Banno F."/>
            <person name="Bowser L."/>
            <person name="Brooks S.Y."/>
            <person name="Carninci P."/>
            <person name="Chao Q."/>
            <person name="Choy N."/>
            <person name="Enju A."/>
            <person name="Goldsmith A.D."/>
            <person name="Gurjal M."/>
            <person name="Hansen N.F."/>
            <person name="Hayashizaki Y."/>
            <person name="Johnson-Hopson C."/>
            <person name="Hsuan V.W."/>
            <person name="Iida K."/>
            <person name="Karnes M."/>
            <person name="Khan S."/>
            <person name="Koesema E."/>
            <person name="Ishida J."/>
            <person name="Jiang P.X."/>
            <person name="Jones T."/>
            <person name="Kawai J."/>
            <person name="Kamiya A."/>
            <person name="Meyers C."/>
            <person name="Nakajima M."/>
            <person name="Narusaka M."/>
            <person name="Seki M."/>
            <person name="Sakurai T."/>
            <person name="Satou M."/>
            <person name="Tamse R."/>
            <person name="Vaysberg M."/>
            <person name="Wallender E.K."/>
            <person name="Wong C."/>
            <person name="Yamamura Y."/>
            <person name="Yuan S."/>
            <person name="Shinozaki K."/>
            <person name="Davis R.W."/>
            <person name="Theologis A."/>
            <person name="Ecker J.R."/>
        </authorList>
    </citation>
    <scope>NUCLEOTIDE SEQUENCE [LARGE SCALE MRNA]</scope>
    <source>
        <strain>cv. Columbia</strain>
    </source>
</reference>
<reference key="5">
    <citation type="submission" date="2005-03" db="EMBL/GenBank/DDBJ databases">
        <title>Large-scale analysis of RIKEN Arabidopsis full-length (RAFL) cDNAs.</title>
        <authorList>
            <person name="Totoki Y."/>
            <person name="Seki M."/>
            <person name="Ishida J."/>
            <person name="Nakajima M."/>
            <person name="Enju A."/>
            <person name="Kamiya A."/>
            <person name="Narusaka M."/>
            <person name="Shin-i T."/>
            <person name="Nakagawa M."/>
            <person name="Sakamoto N."/>
            <person name="Oishi K."/>
            <person name="Kohara Y."/>
            <person name="Kobayashi M."/>
            <person name="Toyoda A."/>
            <person name="Sakaki Y."/>
            <person name="Sakurai T."/>
            <person name="Iida K."/>
            <person name="Akiyama K."/>
            <person name="Satou M."/>
            <person name="Toyoda T."/>
            <person name="Konagaya A."/>
            <person name="Carninci P."/>
            <person name="Kawai J."/>
            <person name="Hayashizaki Y."/>
            <person name="Shinozaki K."/>
        </authorList>
    </citation>
    <scope>NUCLEOTIDE SEQUENCE [LARGE SCALE MRNA] OF 287-678</scope>
    <source>
        <strain>cv. Columbia</strain>
    </source>
</reference>
<reference key="6">
    <citation type="journal article" date="2004" name="Plant Physiol.">
        <title>Purification and characterization of enzymes exhibiting beta-D-xylosidase activities in stem tissues of Arabidopsis.</title>
        <authorList>
            <person name="Minic Z."/>
            <person name="Rihouey C."/>
            <person name="Do C.T."/>
            <person name="Lerouge P."/>
            <person name="Jouanin L."/>
        </authorList>
    </citation>
    <scope>FUNCTION</scope>
    <scope>CATALYTIC ACTIVITY</scope>
    <scope>BIOPHYSICOCHEMICAL PROPERTIES</scope>
    <scope>TISSUE SPECIFICITY</scope>
</reference>
<reference key="7">
    <citation type="journal article" date="2006" name="J. Exp. Bot.">
        <title>Purification, functional characterization, cloning, and identification of mutants of a seed-specific arabinan hydrolase in Arabidopsis.</title>
        <authorList>
            <person name="Minic Z."/>
            <person name="Do C.-T."/>
            <person name="Rihouey C."/>
            <person name="Morin H."/>
            <person name="Lerouge P."/>
            <person name="Jouanin L."/>
        </authorList>
    </citation>
    <scope>FUNCTION</scope>
    <scope>CATALYTIC ACTIVITY</scope>
    <scope>BIOPHYSICOCHEMICAL PROPERTIES</scope>
</reference>
<reference key="8">
    <citation type="journal article" date="2008" name="Plant Physiol.">
        <title>Cell wall modifications in Arabidopsis plants with altered alpha-L-arabinofuranosidase activity.</title>
        <authorList>
            <person name="Chavez Montes R.A."/>
            <person name="Ranocha P."/>
            <person name="Martinez Y."/>
            <person name="Minic Z."/>
            <person name="Jouanin L."/>
            <person name="Marquis M."/>
            <person name="Saulnier L."/>
            <person name="Fulton L.M."/>
            <person name="Cobbett C.S."/>
            <person name="Bitton F."/>
            <person name="Renou J.-P."/>
            <person name="Jauneau A."/>
            <person name="Goffner D."/>
        </authorList>
    </citation>
    <scope>FUNCTION</scope>
    <scope>TISSUE SPECIFICITY</scope>
    <scope>DISRUPTION PHENOTYPE</scope>
</reference>
<name>ASD1_ARATH</name>
<proteinExistence type="evidence at protein level"/>
<organism>
    <name type="scientific">Arabidopsis thaliana</name>
    <name type="common">Mouse-ear cress</name>
    <dbReference type="NCBI Taxonomy" id="3702"/>
    <lineage>
        <taxon>Eukaryota</taxon>
        <taxon>Viridiplantae</taxon>
        <taxon>Streptophyta</taxon>
        <taxon>Embryophyta</taxon>
        <taxon>Tracheophyta</taxon>
        <taxon>Spermatophyta</taxon>
        <taxon>Magnoliopsida</taxon>
        <taxon>eudicotyledons</taxon>
        <taxon>Gunneridae</taxon>
        <taxon>Pentapetalae</taxon>
        <taxon>rosids</taxon>
        <taxon>malvids</taxon>
        <taxon>Brassicales</taxon>
        <taxon>Brassicaceae</taxon>
        <taxon>Camelineae</taxon>
        <taxon>Arabidopsis</taxon>
    </lineage>
</organism>
<sequence length="678" mass="75045">MDMESWKLLRSVCVLSFLLGSCFVYQSLRVVDAQEDPKPAVTLQVDASNGGGRPIPETLFGIFFEEINHAGAGGLWAELVSNRGFEAGGQNTPSNIWPWSIVGDHSSIYVATDRSSCFERNKIALRMDVLCDSKGCPSGGVGVYNPGYWGMNIEEGKKYKVALYVRSTGDIDLSVSLTSSNGSRTLASEKIIASASDVSKWIKKEVLLEAKATDPSARLQLTTTKKGSIWIDQVSAMPVDTHKGHGFRNDLFQMMADIKPRFIRFPGGCFVEGEWLSNAFRWKETVGPWEERPGHFGDVWKYWTDDGLGHFEFFQMAEDIGAAPIWVFNNGISHNDEVETASIMPFVQEALDGIEFARGDANSTWGSVRAKMGRQEPFELKYVAIGNEDCGKTYYRGNYIVFYDAIKKAYPDIKIISNCDGSSHPLDHPADYYDYHIYTSASNLFSMYHQFDRTSRKGPKAFVSEYAVTGKDAGTGSLLASLAEAAFLIGLEKNSDIVEMASYAPLFVNTNDRRWNPDAIVFNSSHLYGTPSYWVQRFFAESSGATLLTSTLKGNSTSLVASAISWKNNGKDYIRIKAVNFGANSENMQVLVTGLDPNVMRVSGSKKTVLTSTNVMDENSFSQPEKVVPHESLLELAEEDMTVVLPPHSFSSFDLLKESAKIRMPISDSSSHQKTTTV</sequence>
<keyword id="KW-0272">Extracellular matrix</keyword>
<keyword id="KW-0325">Glycoprotein</keyword>
<keyword id="KW-0378">Hydrolase</keyword>
<keyword id="KW-1185">Reference proteome</keyword>
<keyword id="KW-0964">Secreted</keyword>
<keyword id="KW-0732">Signal</keyword>
<comment type="function">
    <text evidence="3 4 5">May be involved in the coordinated dissolution of the cell wall matrix during abscission and in the secondary cell wall formation in xylem vessels. Prefers arabinoxylan, but may also use pectic arabinans as substrates.</text>
</comment>
<comment type="catalytic activity">
    <reaction evidence="3 4">
        <text>Hydrolysis of terminal non-reducing alpha-L-arabinofuranoside residues in alpha-L-arabinosides.</text>
        <dbReference type="EC" id="3.2.1.55"/>
    </reaction>
</comment>
<comment type="biophysicochemical properties">
    <kinetics>
        <KM evidence="3 4">0.48 mM for p-nitrophenyl-beta-D-xylopyranoside</KM>
        <KM evidence="3 4">5.2 mM for (1,5)-alpha-L-arabinobiose (at 37 degrees Celsius)</KM>
    </kinetics>
    <phDependence>
        <text evidence="3 4">Optimum pH is 4.3.</text>
    </phDependence>
    <temperatureDependence>
        <text evidence="3 4">Optimum temperature is 67 degrees Celsius.</text>
    </temperatureDependence>
</comment>
<comment type="subcellular location">
    <subcellularLocation>
        <location evidence="6">Secreted</location>
        <location evidence="6">Extracellular space</location>
        <location evidence="6">Extracellular matrix</location>
    </subcellularLocation>
</comment>
<comment type="tissue specificity">
    <text evidence="2 3 5">Expressed in roots, leaves, flowers, stems, siliques and seedlings. Observed in zones of cell proliferation, the vascular system and floral abscission zones. Expressed in the guard cells in stems, in xylem vessels and parenchyma cells surrounding the vessels, in the cambium and in the phloem, but not in the secondary xylem.</text>
</comment>
<comment type="induction">
    <text evidence="2">Not induced by hormones or during leaf senescence.</text>
</comment>
<comment type="disruption phenotype">
    <text evidence="5">No visible phenotype; even in asd1 and asd2 double mutant.</text>
</comment>
<comment type="similarity">
    <text evidence="6">Belongs to the glycosyl hydrolase 51 family.</text>
</comment>
<dbReference type="EC" id="3.2.1.55"/>
<dbReference type="EC" id="3.2.1.-"/>
<dbReference type="EMBL" id="AY243509">
    <property type="protein sequence ID" value="AAO92261.1"/>
    <property type="molecule type" value="mRNA"/>
</dbReference>
<dbReference type="EMBL" id="AC011708">
    <property type="protein sequence ID" value="AAF19575.1"/>
    <property type="molecule type" value="Genomic_DNA"/>
</dbReference>
<dbReference type="EMBL" id="CP002686">
    <property type="protein sequence ID" value="AEE74949.1"/>
    <property type="molecule type" value="Genomic_DNA"/>
</dbReference>
<dbReference type="EMBL" id="CP002686">
    <property type="protein sequence ID" value="ANM64547.1"/>
    <property type="molecule type" value="Genomic_DNA"/>
</dbReference>
<dbReference type="EMBL" id="AF372949">
    <property type="protein sequence ID" value="AAK50089.1"/>
    <property type="molecule type" value="mRNA"/>
</dbReference>
<dbReference type="EMBL" id="AY143944">
    <property type="protein sequence ID" value="AAN28883.1"/>
    <property type="molecule type" value="mRNA"/>
</dbReference>
<dbReference type="EMBL" id="AK222175">
    <property type="protein sequence ID" value="BAD95302.1"/>
    <property type="molecule type" value="mRNA"/>
</dbReference>
<dbReference type="EMBL" id="AK220766">
    <property type="protein sequence ID" value="BAD93969.1"/>
    <property type="molecule type" value="mRNA"/>
</dbReference>
<dbReference type="RefSeq" id="NP_001326566.1">
    <property type="nucleotide sequence ID" value="NM_001337893.1"/>
</dbReference>
<dbReference type="RefSeq" id="NP_187685.1">
    <property type="nucleotide sequence ID" value="NM_111911.5"/>
</dbReference>
<dbReference type="SMR" id="Q9SG80"/>
<dbReference type="FunCoup" id="Q9SG80">
    <property type="interactions" value="237"/>
</dbReference>
<dbReference type="STRING" id="3702.Q9SG80"/>
<dbReference type="CAZy" id="GH51">
    <property type="family name" value="Glycoside Hydrolase Family 51"/>
</dbReference>
<dbReference type="GlyCosmos" id="Q9SG80">
    <property type="glycosylation" value="4 sites, No reported glycans"/>
</dbReference>
<dbReference type="GlyGen" id="Q9SG80">
    <property type="glycosylation" value="4 sites"/>
</dbReference>
<dbReference type="PaxDb" id="3702-AT3G10740.1"/>
<dbReference type="ProteomicsDB" id="246496"/>
<dbReference type="EnsemblPlants" id="AT3G10740.1">
    <property type="protein sequence ID" value="AT3G10740.1"/>
    <property type="gene ID" value="AT3G10740"/>
</dbReference>
<dbReference type="EnsemblPlants" id="AT3G10740.3">
    <property type="protein sequence ID" value="AT3G10740.3"/>
    <property type="gene ID" value="AT3G10740"/>
</dbReference>
<dbReference type="GeneID" id="820243"/>
<dbReference type="Gramene" id="AT3G10740.1">
    <property type="protein sequence ID" value="AT3G10740.1"/>
    <property type="gene ID" value="AT3G10740"/>
</dbReference>
<dbReference type="Gramene" id="AT3G10740.3">
    <property type="protein sequence ID" value="AT3G10740.3"/>
    <property type="gene ID" value="AT3G10740"/>
</dbReference>
<dbReference type="KEGG" id="ath:AT3G10740"/>
<dbReference type="Araport" id="AT3G10740"/>
<dbReference type="TAIR" id="AT3G10740">
    <property type="gene designation" value="ASD1"/>
</dbReference>
<dbReference type="eggNOG" id="ENOG502QQEX">
    <property type="taxonomic scope" value="Eukaryota"/>
</dbReference>
<dbReference type="HOGENOM" id="CLU_010060_3_0_1"/>
<dbReference type="InParanoid" id="Q9SG80"/>
<dbReference type="OMA" id="NEGYWGM"/>
<dbReference type="PhylomeDB" id="Q9SG80"/>
<dbReference type="BioCyc" id="ARA:AT3G10740-MONOMER"/>
<dbReference type="SABIO-RK" id="Q9SG80"/>
<dbReference type="PRO" id="PR:Q9SG80"/>
<dbReference type="Proteomes" id="UP000006548">
    <property type="component" value="Chromosome 3"/>
</dbReference>
<dbReference type="ExpressionAtlas" id="Q9SG80">
    <property type="expression patterns" value="baseline and differential"/>
</dbReference>
<dbReference type="GO" id="GO:0048046">
    <property type="term" value="C:apoplast"/>
    <property type="evidence" value="ECO:0007005"/>
    <property type="project" value="TAIR"/>
</dbReference>
<dbReference type="GO" id="GO:0000325">
    <property type="term" value="C:plant-type vacuole"/>
    <property type="evidence" value="ECO:0007005"/>
    <property type="project" value="TAIR"/>
</dbReference>
<dbReference type="GO" id="GO:0099503">
    <property type="term" value="C:secretory vesicle"/>
    <property type="evidence" value="ECO:0007005"/>
    <property type="project" value="TAIR"/>
</dbReference>
<dbReference type="GO" id="GO:0046556">
    <property type="term" value="F:alpha-L-arabinofuranosidase activity"/>
    <property type="evidence" value="ECO:0000314"/>
    <property type="project" value="TAIR"/>
</dbReference>
<dbReference type="GO" id="GO:0009044">
    <property type="term" value="F:xylan 1,4-beta-xylosidase activity"/>
    <property type="evidence" value="ECO:0000314"/>
    <property type="project" value="TAIR"/>
</dbReference>
<dbReference type="GO" id="GO:0046373">
    <property type="term" value="P:L-arabinose metabolic process"/>
    <property type="evidence" value="ECO:0007669"/>
    <property type="project" value="InterPro"/>
</dbReference>
<dbReference type="GO" id="GO:0045493">
    <property type="term" value="P:xylan catabolic process"/>
    <property type="evidence" value="ECO:0000314"/>
    <property type="project" value="TAIR"/>
</dbReference>
<dbReference type="FunFam" id="2.60.40.1180:FF:000011">
    <property type="entry name" value="Alpha-L-arabinofuranosidase 1"/>
    <property type="match status" value="1"/>
</dbReference>
<dbReference type="FunFam" id="3.20.20.80:FF:000025">
    <property type="entry name" value="Alpha-L-arabinofuranosidase 1"/>
    <property type="match status" value="1"/>
</dbReference>
<dbReference type="FunFam" id="2.60.120.260:FF:000063">
    <property type="entry name" value="Putative alpha-L-arabinofuranosidase family protein"/>
    <property type="match status" value="1"/>
</dbReference>
<dbReference type="Gene3D" id="3.20.20.80">
    <property type="entry name" value="Glycosidases"/>
    <property type="match status" value="1"/>
</dbReference>
<dbReference type="Gene3D" id="2.60.40.1180">
    <property type="entry name" value="Golgi alpha-mannosidase II"/>
    <property type="match status" value="1"/>
</dbReference>
<dbReference type="InterPro" id="IPR010720">
    <property type="entry name" value="Alpha-L-AF_C"/>
</dbReference>
<dbReference type="InterPro" id="IPR055235">
    <property type="entry name" value="ASD1_cat"/>
</dbReference>
<dbReference type="InterPro" id="IPR008979">
    <property type="entry name" value="Galactose-bd-like_sf"/>
</dbReference>
<dbReference type="InterPro" id="IPR013780">
    <property type="entry name" value="Glyco_hydro_b"/>
</dbReference>
<dbReference type="InterPro" id="IPR017853">
    <property type="entry name" value="Glycoside_hydrolase_SF"/>
</dbReference>
<dbReference type="InterPro" id="IPR051563">
    <property type="entry name" value="Glycosyl_Hydrolase_51"/>
</dbReference>
<dbReference type="PANTHER" id="PTHR31776">
    <property type="entry name" value="ALPHA-L-ARABINOFURANOSIDASE 1"/>
    <property type="match status" value="1"/>
</dbReference>
<dbReference type="PANTHER" id="PTHR31776:SF0">
    <property type="entry name" value="ALPHA-L-ARABINOFURANOSIDASE 1"/>
    <property type="match status" value="1"/>
</dbReference>
<dbReference type="Pfam" id="PF06964">
    <property type="entry name" value="Alpha-L-AF_C"/>
    <property type="match status" value="1"/>
</dbReference>
<dbReference type="Pfam" id="PF22848">
    <property type="entry name" value="ASD1_dom"/>
    <property type="match status" value="1"/>
</dbReference>
<dbReference type="SMART" id="SM00813">
    <property type="entry name" value="Alpha-L-AF_C"/>
    <property type="match status" value="1"/>
</dbReference>
<dbReference type="SUPFAM" id="SSF51445">
    <property type="entry name" value="(Trans)glycosidases"/>
    <property type="match status" value="1"/>
</dbReference>
<dbReference type="SUPFAM" id="SSF49785">
    <property type="entry name" value="Galactose-binding domain-like"/>
    <property type="match status" value="1"/>
</dbReference>
<dbReference type="SUPFAM" id="SSF51011">
    <property type="entry name" value="Glycosyl hydrolase domain"/>
    <property type="match status" value="1"/>
</dbReference>
<protein>
    <recommendedName>
        <fullName>Alpha-L-arabinofuranosidase 1</fullName>
        <shortName>AtASD1</shortName>
        <ecNumber>3.2.1.55</ecNumber>
    </recommendedName>
    <alternativeName>
        <fullName>Beta-D-xylosidase</fullName>
        <ecNumber>3.2.1.-</ecNumber>
    </alternativeName>
</protein>